<dbReference type="EC" id="4.2.3.46" evidence="5 6"/>
<dbReference type="EC" id="2.5.1.-"/>
<dbReference type="EMBL" id="AY182241">
    <property type="protein sequence ID" value="AAO22848.2"/>
    <property type="molecule type" value="mRNA"/>
</dbReference>
<dbReference type="EMBL" id="AY523409">
    <property type="protein sequence ID" value="AAS01424.1"/>
    <property type="molecule type" value="mRNA"/>
</dbReference>
<dbReference type="EMBL" id="AY563622">
    <property type="protein sequence ID" value="AAS68019.1"/>
    <property type="molecule type" value="mRNA"/>
</dbReference>
<dbReference type="EMBL" id="AY787633">
    <property type="protein sequence ID" value="AAX19772.1"/>
    <property type="molecule type" value="mRNA"/>
</dbReference>
<dbReference type="EMBL" id="AY787634">
    <property type="protein sequence ID" value="AAX19773.1"/>
    <property type="molecule type" value="mRNA"/>
</dbReference>
<dbReference type="EMBL" id="AY787635">
    <property type="protein sequence ID" value="AAX19774.1"/>
    <property type="molecule type" value="mRNA"/>
</dbReference>
<dbReference type="EMBL" id="AY787636">
    <property type="protein sequence ID" value="AAX19775.1"/>
    <property type="molecule type" value="mRNA"/>
</dbReference>
<dbReference type="EMBL" id="AY787638">
    <property type="protein sequence ID" value="AAX19777.1"/>
    <property type="molecule type" value="mRNA"/>
</dbReference>
<dbReference type="EMBL" id="AY787639">
    <property type="protein sequence ID" value="AAX19778.1"/>
    <property type="molecule type" value="mRNA"/>
</dbReference>
<dbReference type="EMBL" id="AY787640">
    <property type="protein sequence ID" value="AAX19779.1"/>
    <property type="molecule type" value="mRNA"/>
</dbReference>
<dbReference type="EMBL" id="AY787641">
    <property type="protein sequence ID" value="AAX19780.1"/>
    <property type="molecule type" value="mRNA"/>
</dbReference>
<dbReference type="EMBL" id="AY805408">
    <property type="protein sequence ID" value="AAX21241.1"/>
    <property type="molecule type" value="Genomic_DNA"/>
</dbReference>
<dbReference type="EMBL" id="AY805409">
    <property type="protein sequence ID" value="AAX21242.1"/>
    <property type="molecule type" value="Genomic_DNA"/>
</dbReference>
<dbReference type="EMBL" id="AY805410">
    <property type="protein sequence ID" value="AAX21243.1"/>
    <property type="molecule type" value="Genomic_DNA"/>
</dbReference>
<dbReference type="EMBL" id="AY805413">
    <property type="protein sequence ID" value="AAX21246.1"/>
    <property type="molecule type" value="Genomic_DNA"/>
</dbReference>
<dbReference type="EMBL" id="AY805414">
    <property type="protein sequence ID" value="AAX21247.1"/>
    <property type="molecule type" value="Genomic_DNA"/>
</dbReference>
<dbReference type="EMBL" id="AY805415">
    <property type="protein sequence ID" value="AAX21248.1"/>
    <property type="molecule type" value="Genomic_DNA"/>
</dbReference>
<dbReference type="EMBL" id="AY805416">
    <property type="protein sequence ID" value="AAX21249.1"/>
    <property type="molecule type" value="Genomic_DNA"/>
</dbReference>
<dbReference type="EMBL" id="AY805417">
    <property type="protein sequence ID" value="AAX21250.1"/>
    <property type="molecule type" value="Genomic_DNA"/>
</dbReference>
<dbReference type="EMBL" id="AY805418">
    <property type="protein sequence ID" value="AAX21251.1"/>
    <property type="molecule type" value="Genomic_DNA"/>
</dbReference>
<dbReference type="EMBL" id="AY805419">
    <property type="protein sequence ID" value="AAX21252.1"/>
    <property type="molecule type" value="Genomic_DNA"/>
</dbReference>
<dbReference type="EMBL" id="DQ901739">
    <property type="protein sequence ID" value="ABJ90485.1"/>
    <property type="molecule type" value="Genomic_DNA"/>
</dbReference>
<dbReference type="RefSeq" id="NP_001280822.1">
    <property type="nucleotide sequence ID" value="NM_001293893.1"/>
</dbReference>
<dbReference type="SMR" id="Q84LB2"/>
<dbReference type="GeneID" id="103446592"/>
<dbReference type="KEGG" id="mdm:103446592"/>
<dbReference type="OrthoDB" id="1161874at2759"/>
<dbReference type="BioCyc" id="MetaCyc:MONOMER-13546"/>
<dbReference type="BRENDA" id="4.2.3.46">
    <property type="organism ID" value="3164"/>
</dbReference>
<dbReference type="SABIO-RK" id="Q84LB2"/>
<dbReference type="GO" id="GO:0005737">
    <property type="term" value="C:cytoplasm"/>
    <property type="evidence" value="ECO:0007669"/>
    <property type="project" value="UniProtKB-SubCell"/>
</dbReference>
<dbReference type="GO" id="GO:0052578">
    <property type="term" value="F:alpha-farnesene synthase activity"/>
    <property type="evidence" value="ECO:0007669"/>
    <property type="project" value="RHEA"/>
</dbReference>
<dbReference type="GO" id="GO:0000287">
    <property type="term" value="F:magnesium ion binding"/>
    <property type="evidence" value="ECO:0007669"/>
    <property type="project" value="InterPro"/>
</dbReference>
<dbReference type="GO" id="GO:0016740">
    <property type="term" value="F:transferase activity"/>
    <property type="evidence" value="ECO:0007669"/>
    <property type="project" value="UniProtKB-KW"/>
</dbReference>
<dbReference type="GO" id="GO:0016102">
    <property type="term" value="P:diterpenoid biosynthetic process"/>
    <property type="evidence" value="ECO:0007669"/>
    <property type="project" value="InterPro"/>
</dbReference>
<dbReference type="CDD" id="cd00684">
    <property type="entry name" value="Terpene_cyclase_plant_C1"/>
    <property type="match status" value="1"/>
</dbReference>
<dbReference type="FunFam" id="1.10.600.10:FF:000007">
    <property type="entry name" value="Isoprene synthase, chloroplastic"/>
    <property type="match status" value="1"/>
</dbReference>
<dbReference type="Gene3D" id="1.10.600.10">
    <property type="entry name" value="Farnesyl Diphosphate Synthase"/>
    <property type="match status" value="1"/>
</dbReference>
<dbReference type="Gene3D" id="1.50.10.130">
    <property type="entry name" value="Terpene synthase, N-terminal domain"/>
    <property type="match status" value="1"/>
</dbReference>
<dbReference type="InterPro" id="IPR008949">
    <property type="entry name" value="Isoprenoid_synthase_dom_sf"/>
</dbReference>
<dbReference type="InterPro" id="IPR034741">
    <property type="entry name" value="Terpene_cyclase-like_1_C"/>
</dbReference>
<dbReference type="InterPro" id="IPR044814">
    <property type="entry name" value="Terpene_cyclase_plant_C1"/>
</dbReference>
<dbReference type="InterPro" id="IPR001906">
    <property type="entry name" value="Terpene_synth_N"/>
</dbReference>
<dbReference type="InterPro" id="IPR036965">
    <property type="entry name" value="Terpene_synth_N_sf"/>
</dbReference>
<dbReference type="InterPro" id="IPR050148">
    <property type="entry name" value="Terpene_synthase-like"/>
</dbReference>
<dbReference type="InterPro" id="IPR005630">
    <property type="entry name" value="Terpene_synthase_metal-bd"/>
</dbReference>
<dbReference type="InterPro" id="IPR008930">
    <property type="entry name" value="Terpenoid_cyclase/PrenylTrfase"/>
</dbReference>
<dbReference type="PANTHER" id="PTHR31225:SF94">
    <property type="entry name" value="ALPHA-FARNESENE SYNTHASE"/>
    <property type="match status" value="1"/>
</dbReference>
<dbReference type="PANTHER" id="PTHR31225">
    <property type="entry name" value="OS04G0344100 PROTEIN-RELATED"/>
    <property type="match status" value="1"/>
</dbReference>
<dbReference type="Pfam" id="PF01397">
    <property type="entry name" value="Terpene_synth"/>
    <property type="match status" value="1"/>
</dbReference>
<dbReference type="Pfam" id="PF03936">
    <property type="entry name" value="Terpene_synth_C"/>
    <property type="match status" value="1"/>
</dbReference>
<dbReference type="SFLD" id="SFLDS00005">
    <property type="entry name" value="Isoprenoid_Synthase_Type_I"/>
    <property type="match status" value="1"/>
</dbReference>
<dbReference type="SFLD" id="SFLDG01019">
    <property type="entry name" value="Terpene_Cyclase_Like_1_C_Termi"/>
    <property type="match status" value="1"/>
</dbReference>
<dbReference type="SUPFAM" id="SSF48239">
    <property type="entry name" value="Terpenoid cyclases/Protein prenyltransferases"/>
    <property type="match status" value="1"/>
</dbReference>
<dbReference type="SUPFAM" id="SSF48576">
    <property type="entry name" value="Terpenoid synthases"/>
    <property type="match status" value="1"/>
</dbReference>
<reference key="1">
    <citation type="journal article" date="2004" name="Planta">
        <title>Cloning and functional expression of an (E, E)-alpha-farnesene synthase cDNA from peel tissue of apple fruit.</title>
        <authorList>
            <person name="Pechous S.W."/>
            <person name="Whitaker B.D."/>
        </authorList>
    </citation>
    <scope>NUCLEOTIDE SEQUENCE [MRNA]</scope>
    <scope>CATALYTIC ACTIVITY</scope>
    <scope>INDUCTION BY 1-MCP</scope>
    <source>
        <strain>cv. Law Rome</strain>
        <tissue>Peelings</tissue>
    </source>
</reference>
<reference key="2">
    <citation type="journal article" date="2005" name="Postharvest Biol. Technol.">
        <title>Expression of a-farnesene synthase gene AFS1 in relation to levels of a-farnesene and conjugated trienols in peel tissue of scald-susceptible 'Law Rome' and scald-resistant 'Idared' apple fruit.</title>
        <authorList>
            <person name="Pechous S.W."/>
            <person name="Watkins C.B."/>
            <person name="Whitaker B.D."/>
        </authorList>
    </citation>
    <scope>NUCLEOTIDE SEQUENCE [MRNA]</scope>
    <source>
        <strain>cv. Idared</strain>
        <tissue>Peelings</tissue>
    </source>
</reference>
<reference key="3">
    <citation type="journal article" date="2007" name="Phytochemistry">
        <title>Unusual features of a recombinant apple alpha-farnesene synthase.</title>
        <authorList>
            <person name="Green S."/>
            <person name="Friel E.N."/>
            <person name="Matich A."/>
            <person name="Beuning L.L."/>
            <person name="Cooney J.M."/>
            <person name="Rowan D.D."/>
            <person name="MacRae E."/>
        </authorList>
    </citation>
    <scope>NUCLEOTIDE SEQUENCE [GENOMIC DNA / MRNA]</scope>
    <scope>CATALYTIC ACTIVITY</scope>
    <scope>COFACTOR</scope>
    <scope>BIOPHYSICOCHEMICAL PROPERTIES</scope>
    <scope>SUBUNIT</scope>
    <scope>MUTAGENESIS OF ASP-326 AND ASP-330</scope>
    <source>
        <strain>cv. Aotea</strain>
        <strain>cv. Pinkie</strain>
        <strain>cv. Royal Gala</strain>
    </source>
</reference>
<reference key="4">
    <citation type="journal article" date="2007" name="Yuan Yi Xue Bao">
        <title>Genomic structure and sequence polymorphism of E,E-alpha-farnesene synthase gene in apples (Malus domestica Borkh.).</title>
        <authorList>
            <person name="Yuan K.J."/>
            <person name="Liu Q.Z."/>
            <person name="Li B."/>
            <person name="Zhang L.S."/>
        </authorList>
    </citation>
    <scope>NUCLEOTIDE SEQUENCE [GENOMIC DNA / MRNA]</scope>
    <source>
        <strain>cv. Ralls</strain>
        <tissue>Leaf</tissue>
    </source>
</reference>
<reference key="5">
    <citation type="journal article" date="2009" name="J. Biol. Chem.">
        <title>Defining the potassium binding region in an apple terpene synthase.</title>
        <authorList>
            <person name="Green S."/>
            <person name="Squire C.J."/>
            <person name="Nieuwenhuizen N.J."/>
            <person name="Baker E.N."/>
            <person name="Laing W."/>
        </authorList>
    </citation>
    <scope>POTASSIUM-BINDING</scope>
    <scope>MUTAGENESIS OF ASP-484; SER-485; SER-487 AND SER-488</scope>
</reference>
<comment type="function">
    <text>Sesquiterpene synthase catalyzing the production of (E,E)-alpha-farnesene, the predominant terpene produced during storage of fruits. Produces all six isomers (E,E)-alpha-farnesene, (Z,E)-alpha-farnesene, (E,Z)-alpha-farnesene, (Z,Z)-alpha-farnesene, (E)-beta-farnesene and (Z)-beta-farnesene from a mix of isomeric forms of the farnesyl diphosphate precursor. Able to convert geranyl diphosphate to the monoterpenes (E)-beta-ocimene, linalool and beta-myrcene. Also has a prenyltransferase activity producing alpha-farnesene directly from geranyl diphosphate and isoprenyl diphosphate.</text>
</comment>
<comment type="catalytic activity">
    <reaction evidence="5 6">
        <text>(2E,6E)-farnesyl diphosphate = (3E,6E)-alpha-farnesene + diphosphate</text>
        <dbReference type="Rhea" id="RHEA:27421"/>
        <dbReference type="ChEBI" id="CHEBI:10280"/>
        <dbReference type="ChEBI" id="CHEBI:33019"/>
        <dbReference type="ChEBI" id="CHEBI:175763"/>
        <dbReference type="EC" id="4.2.3.46"/>
    </reaction>
</comment>
<comment type="cofactor">
    <cofactor evidence="6">
        <name>Mg(2+)</name>
        <dbReference type="ChEBI" id="CHEBI:18420"/>
    </cofactor>
    <cofactor evidence="6">
        <name>Mn(2+)</name>
        <dbReference type="ChEBI" id="CHEBI:29035"/>
    </cofactor>
    <text evidence="2">Binds 3 Mg(2+) or Mn(2+) ions per subunit.</text>
</comment>
<comment type="cofactor">
    <cofactor evidence="6">
        <name>K(+)</name>
        <dbReference type="ChEBI" id="CHEBI:29103"/>
    </cofactor>
</comment>
<comment type="biophysicochemical properties">
    <kinetics>
        <KM evidence="6">3 uM for farnesyl diphosphate</KM>
        <text>activity enhanced 5-fold on addition of 30-50 mM potassium.</text>
    </kinetics>
    <phDependence>
        <text evidence="6">Optimum pH is 7.0-8.5.</text>
    </phDependence>
</comment>
<comment type="subunit">
    <text evidence="6">Monomer.</text>
</comment>
<comment type="subcellular location">
    <subcellularLocation>
        <location evidence="1">Cytoplasm</location>
    </subcellularLocation>
</comment>
<comment type="induction">
    <text evidence="5">Up-regulated by ethylene. Inhibited by 1-methylcyclopropene (1-MCP).</text>
</comment>
<comment type="domain">
    <text evidence="8">The Asp-Asp-Xaa-Xaa-Asp/Glu (DDXXD/E) motif is important for the catalytic activity, presumably through binding to Mg(2+).</text>
</comment>
<comment type="miscellaneous">
    <text>The activity enhancement by potassium is associated only with sesquiterpene synthase activity and not monoterpene or prenyltransferase activities.</text>
</comment>
<comment type="miscellaneous">
    <text>Oxidation products of (E,E)-alpha-farnesene are the causal agents of superficial scald.</text>
</comment>
<comment type="similarity">
    <text evidence="8">Belongs to the terpene synthase family. Tpsb subfamily.</text>
</comment>
<accession>Q84LB2</accession>
<accession>Q2VU74</accession>
<accession>Q2VU78</accession>
<accession>Q2VU82</accession>
<accession>Q2VU83</accession>
<accession>Q32WH6</accession>
<accession>Q32WH8</accession>
<accession>Q32WI0</accession>
<accession>Q32WI2</accession>
<accession>Q6Q2J2</accession>
<accession>Q6QWJ1</accession>
<feature type="chain" id="PRO_0000401483" description="(E,E)-alpha-farnesene synthase">
    <location>
        <begin position="1"/>
        <end position="576"/>
    </location>
</feature>
<feature type="short sequence motif" description="DDXXD motif" evidence="4">
    <location>
        <begin position="326"/>
        <end position="330"/>
    </location>
</feature>
<feature type="binding site" evidence="4">
    <location>
        <position position="289"/>
    </location>
    <ligand>
        <name>(2E,6E)-farnesyl diphosphate</name>
        <dbReference type="ChEBI" id="CHEBI:175763"/>
    </ligand>
</feature>
<feature type="binding site" evidence="4">
    <location>
        <position position="326"/>
    </location>
    <ligand>
        <name>(2E,6E)-farnesyl diphosphate</name>
        <dbReference type="ChEBI" id="CHEBI:175763"/>
    </ligand>
</feature>
<feature type="binding site" evidence="3">
    <location>
        <position position="326"/>
    </location>
    <ligand>
        <name>Mg(2+)</name>
        <dbReference type="ChEBI" id="CHEBI:18420"/>
        <label>1</label>
    </ligand>
</feature>
<feature type="binding site" evidence="3">
    <location>
        <position position="326"/>
    </location>
    <ligand>
        <name>Mg(2+)</name>
        <dbReference type="ChEBI" id="CHEBI:18420"/>
        <label>2</label>
    </ligand>
</feature>
<feature type="binding site" evidence="4">
    <location>
        <position position="330"/>
    </location>
    <ligand>
        <name>(2E,6E)-farnesyl diphosphate</name>
        <dbReference type="ChEBI" id="CHEBI:175763"/>
    </ligand>
</feature>
<feature type="binding site" evidence="3">
    <location>
        <position position="330"/>
    </location>
    <ligand>
        <name>Mg(2+)</name>
        <dbReference type="ChEBI" id="CHEBI:18420"/>
        <label>1</label>
    </ligand>
</feature>
<feature type="binding site" evidence="3">
    <location>
        <position position="330"/>
    </location>
    <ligand>
        <name>Mg(2+)</name>
        <dbReference type="ChEBI" id="CHEBI:18420"/>
        <label>2</label>
    </ligand>
</feature>
<feature type="binding site" evidence="4">
    <location>
        <position position="468"/>
    </location>
    <ligand>
        <name>(2E,6E)-farnesyl diphosphate</name>
        <dbReference type="ChEBI" id="CHEBI:175763"/>
    </ligand>
</feature>
<feature type="binding site" evidence="4">
    <location>
        <position position="471"/>
    </location>
    <ligand>
        <name>(2E,6E)-farnesyl diphosphate</name>
        <dbReference type="ChEBI" id="CHEBI:175763"/>
    </ligand>
</feature>
<feature type="binding site" evidence="4">
    <location>
        <position position="471"/>
    </location>
    <ligand>
        <name>Mg(2+)</name>
        <dbReference type="ChEBI" id="CHEBI:18420"/>
        <label>3</label>
    </ligand>
</feature>
<feature type="binding site" evidence="3">
    <location>
        <position position="475"/>
    </location>
    <ligand>
        <name>Mg(2+)</name>
        <dbReference type="ChEBI" id="CHEBI:18420"/>
        <label>3</label>
    </ligand>
</feature>
<feature type="binding site" evidence="3">
    <location>
        <position position="479"/>
    </location>
    <ligand>
        <name>Mg(2+)</name>
        <dbReference type="ChEBI" id="CHEBI:18420"/>
        <label>3</label>
    </ligand>
</feature>
<feature type="binding site" evidence="8">
    <location>
        <position position="484"/>
    </location>
    <ligand>
        <name>K(+)</name>
        <dbReference type="ChEBI" id="CHEBI:29103"/>
    </ligand>
</feature>
<feature type="binding site">
    <location>
        <position position="487"/>
    </location>
    <ligand>
        <name>K(+)</name>
        <dbReference type="ChEBI" id="CHEBI:29103"/>
    </ligand>
</feature>
<feature type="sequence variant" description="In strain: cv. Idared.">
    <original>E</original>
    <variation>K</variation>
    <location>
        <position position="105"/>
    </location>
</feature>
<feature type="sequence variant" description="In strain: cv. Aotea.">
    <original>I</original>
    <variation>V</variation>
    <location>
        <position position="113"/>
    </location>
</feature>
<feature type="sequence variant" description="In strain: cv. Aotea.">
    <original>G</original>
    <variation>A</variation>
    <location>
        <position position="129"/>
    </location>
</feature>
<feature type="sequence variant" description="In strain: cv. Idared.">
    <original>T</original>
    <variation>A</variation>
    <location>
        <position position="130"/>
    </location>
</feature>
<feature type="sequence variant" description="In strain: cv. Aotea.">
    <original>N</original>
    <variation>D</variation>
    <location>
        <position position="237"/>
    </location>
</feature>
<feature type="sequence variant" description="In strain: cv. Idared, cv. Pinkie, cv. Ralls and cv. Royal Gala.">
    <original>I</original>
    <variation>F</variation>
    <location>
        <position position="281"/>
    </location>
</feature>
<feature type="sequence variant" description="In strain: cv. Idared.">
    <original>R</original>
    <variation>G</variation>
    <location>
        <position position="291"/>
    </location>
</feature>
<feature type="sequence variant" description="In strain: cv. cv. Idared, cv. Pinkie, cv. Ralls and cv. Royal Gala.">
    <original>A</original>
    <variation>S</variation>
    <location>
        <position position="297"/>
    </location>
</feature>
<feature type="sequence variant" description="In strain: cv. Aotea.">
    <original>E</original>
    <variation>Q</variation>
    <location>
        <position position="381"/>
    </location>
</feature>
<feature type="sequence variant" description="In strain: cv. Ralls.">
    <original>D</original>
    <variation>G</variation>
    <location>
        <position position="451"/>
    </location>
</feature>
<feature type="sequence variant" description="In strain: cv. Aotea.">
    <original>K</original>
    <variation>E</variation>
    <location>
        <position position="505"/>
    </location>
</feature>
<feature type="sequence variant" description="In strain: cv. Aotea.">
    <original>F</original>
    <variation>S</variation>
    <location>
        <position position="530"/>
    </location>
</feature>
<feature type="sequence variant" description="In strain: cv. Aotea.">
    <original>H</original>
    <variation>Q</variation>
    <location>
        <position position="565"/>
    </location>
</feature>
<feature type="mutagenesis site" description="Loss of monoterpene synthase, sesquiterpene synthase and prenyltransferase activities. Loss of monoterpene synthase, sesquiterpene synthase and prenyltransferase activities; when associated with A-330." evidence="6">
    <original>D</original>
    <variation>A</variation>
    <location>
        <position position="326"/>
    </location>
</feature>
<feature type="mutagenesis site" description="Loss of monoterpene synthase, sesquiterpene synthase and prenyltransferase activities; when associated with A-326." evidence="6">
    <original>D</original>
    <variation>A</variation>
    <location>
        <position position="330"/>
    </location>
</feature>
<feature type="mutagenesis site" description="No effect on sesquiterpene synthase activity, but loss of activity enhancement by potassium." evidence="7">
    <original>D</original>
    <variation>A</variation>
    <location>
        <position position="484"/>
    </location>
</feature>
<feature type="mutagenesis site" description="No effect on sesquiterpene synthase activity and on activity enhancement by potassium, but 2-fold increase in monoterpene synthase activity." evidence="7">
    <original>S</original>
    <variation>A</variation>
    <location>
        <position position="485"/>
    </location>
</feature>
<feature type="mutagenesis site" description="Loss of sesquiterpene synthase activity." evidence="7">
    <original>S</original>
    <variation>A</variation>
    <location>
        <position position="487"/>
    </location>
</feature>
<feature type="mutagenesis site" description="4-fold higher sesquiterpene synthase activity in absence of potassium, and loss of activity enhancement by potassium." evidence="7">
    <original>S</original>
    <variation>K</variation>
    <location>
        <position position="487"/>
    </location>
</feature>
<feature type="mutagenesis site" description="Decreased mono- and sesquiterpene synthase activity, but no effect on activity enhancement by potassium." evidence="7">
    <original>S</original>
    <variation>A</variation>
    <location>
        <position position="488"/>
    </location>
</feature>
<feature type="sequence conflict" description="In Ref. 3; AAX21242." evidence="8" ref="3">
    <original>G</original>
    <variation>S</variation>
    <location>
        <position position="150"/>
    </location>
</feature>
<feature type="sequence conflict" description="In Ref. 3; AAX21251." evidence="8" ref="3">
    <original>F</original>
    <variation>L</variation>
    <location>
        <position position="311"/>
    </location>
</feature>
<feature type="sequence conflict" description="In Ref. 3; AAX21251." evidence="8" ref="3">
    <original>N</original>
    <variation>S</variation>
    <location>
        <position position="343"/>
    </location>
</feature>
<sequence length="576" mass="66183">MEFRVHLQADNEQKIFQNQMKPEPEASYLINQRRSANYKPNIWKNDFLDQSLISKYDGDEYRKLSEKLIEEVKIYISAETMDLVAKLELIDSVRKLGLANLFEKEIKEALDSIAAIESDNLGTRDDLYGTALHFKILRQHGYKVSQDIFGRFMDEKGTLENHHFAHLKGMLELFEASNLGFEGEDILDEAKASLTLALRDSGHICYPDSNLSRDVVHSLELPSHRRVQWFDVKWQINAYEKDICRVNATLLELAKLNFNVVQAQLQKNLREASRWWANLGIADNLKFARDRLVECFACAVGVAFEPEHSSFRICLTKVINLVLIIDDVYDIYGSEEELKHFTNAVDRWDSRETEQLPECMKMCFQVLYNTTCEIAREIEEENGWNQVLPQLTKVWADFCKALLVEAEWYNKSHIPTLEEYLRNGCISSSVSVLLVHSFFSITHEGTKEMADFLHKNEDLLYNISLIVRLNNDLGTSAAEQERGDSPSSIVCYMREVNASEETARKNIKGMIDNAWKKVNGKCFTTNQVPFLSSFMNNATNMARVAHSLYKDGDGFGDQEKGPRTHILSLLFQPLVN</sequence>
<gene>
    <name type="primary">AFS1</name>
    <name type="synonym">AFAR</name>
</gene>
<proteinExistence type="evidence at protein level"/>
<evidence type="ECO:0000250" key="1"/>
<evidence type="ECO:0000250" key="2">
    <source>
        <dbReference type="UniProtKB" id="A0A1C9J6A7"/>
    </source>
</evidence>
<evidence type="ECO:0000250" key="3">
    <source>
        <dbReference type="UniProtKB" id="O81192"/>
    </source>
</evidence>
<evidence type="ECO:0000250" key="4">
    <source>
        <dbReference type="UniProtKB" id="Q40577"/>
    </source>
</evidence>
<evidence type="ECO:0000269" key="5">
    <source>
    </source>
</evidence>
<evidence type="ECO:0000269" key="6">
    <source>
    </source>
</evidence>
<evidence type="ECO:0000269" key="7">
    <source>
    </source>
</evidence>
<evidence type="ECO:0000305" key="8"/>
<keyword id="KW-0963">Cytoplasm</keyword>
<keyword id="KW-0456">Lyase</keyword>
<keyword id="KW-0460">Magnesium</keyword>
<keyword id="KW-0464">Manganese</keyword>
<keyword id="KW-0479">Metal-binding</keyword>
<keyword id="KW-0630">Potassium</keyword>
<keyword id="KW-0808">Transferase</keyword>
<name>AFS1_MALDO</name>
<protein>
    <recommendedName>
        <fullName>(E,E)-alpha-farnesene synthase</fullName>
        <shortName>MdASF1</shortName>
        <ecNumber evidence="5 6">4.2.3.46</ecNumber>
    </recommendedName>
    <alternativeName>
        <fullName>Prenyltransferase</fullName>
        <ecNumber>2.5.1.-</ecNumber>
    </alternativeName>
</protein>
<organism>
    <name type="scientific">Malus domestica</name>
    <name type="common">Apple</name>
    <name type="synonym">Pyrus malus</name>
    <dbReference type="NCBI Taxonomy" id="3750"/>
    <lineage>
        <taxon>Eukaryota</taxon>
        <taxon>Viridiplantae</taxon>
        <taxon>Streptophyta</taxon>
        <taxon>Embryophyta</taxon>
        <taxon>Tracheophyta</taxon>
        <taxon>Spermatophyta</taxon>
        <taxon>Magnoliopsida</taxon>
        <taxon>eudicotyledons</taxon>
        <taxon>Gunneridae</taxon>
        <taxon>Pentapetalae</taxon>
        <taxon>rosids</taxon>
        <taxon>fabids</taxon>
        <taxon>Rosales</taxon>
        <taxon>Rosaceae</taxon>
        <taxon>Amygdaloideae</taxon>
        <taxon>Maleae</taxon>
        <taxon>Malus</taxon>
    </lineage>
</organism>